<gene>
    <name evidence="1" type="primary">dnaJ1</name>
    <name type="ordered locus">AZOSEA19680</name>
    <name type="ORF">ebA3490</name>
</gene>
<name>DNAJ1_AROAE</name>
<evidence type="ECO:0000255" key="1">
    <source>
        <dbReference type="HAMAP-Rule" id="MF_01152"/>
    </source>
</evidence>
<evidence type="ECO:0000256" key="2">
    <source>
        <dbReference type="SAM" id="MobiDB-lite"/>
    </source>
</evidence>
<protein>
    <recommendedName>
        <fullName evidence="1">Chaperone protein DnaJ 1</fullName>
    </recommendedName>
</protein>
<feature type="chain" id="PRO_0000070713" description="Chaperone protein DnaJ 1">
    <location>
        <begin position="1"/>
        <end position="347"/>
    </location>
</feature>
<feature type="domain" description="J" evidence="1">
    <location>
        <begin position="5"/>
        <end position="75"/>
    </location>
</feature>
<feature type="repeat" description="CXXCXGXG motif">
    <location>
        <begin position="120"/>
        <end position="127"/>
    </location>
</feature>
<feature type="repeat" description="CXXCXGXG motif">
    <location>
        <begin position="137"/>
        <end position="144"/>
    </location>
</feature>
<feature type="repeat" description="CXXCXGXG motif">
    <location>
        <begin position="155"/>
        <end position="162"/>
    </location>
</feature>
<feature type="repeat" description="CXXCXGXG motif">
    <location>
        <begin position="169"/>
        <end position="176"/>
    </location>
</feature>
<feature type="zinc finger region" description="CR-type" evidence="1">
    <location>
        <begin position="107"/>
        <end position="181"/>
    </location>
</feature>
<feature type="region of interest" description="Disordered" evidence="2">
    <location>
        <begin position="68"/>
        <end position="91"/>
    </location>
</feature>
<feature type="compositionally biased region" description="Low complexity" evidence="2">
    <location>
        <begin position="68"/>
        <end position="77"/>
    </location>
</feature>
<feature type="binding site" evidence="1">
    <location>
        <position position="120"/>
    </location>
    <ligand>
        <name>Zn(2+)</name>
        <dbReference type="ChEBI" id="CHEBI:29105"/>
        <label>1</label>
    </ligand>
</feature>
<feature type="binding site" evidence="1">
    <location>
        <position position="123"/>
    </location>
    <ligand>
        <name>Zn(2+)</name>
        <dbReference type="ChEBI" id="CHEBI:29105"/>
        <label>1</label>
    </ligand>
</feature>
<feature type="binding site" evidence="1">
    <location>
        <position position="137"/>
    </location>
    <ligand>
        <name>Zn(2+)</name>
        <dbReference type="ChEBI" id="CHEBI:29105"/>
        <label>2</label>
    </ligand>
</feature>
<feature type="binding site" evidence="1">
    <location>
        <position position="140"/>
    </location>
    <ligand>
        <name>Zn(2+)</name>
        <dbReference type="ChEBI" id="CHEBI:29105"/>
        <label>2</label>
    </ligand>
</feature>
<feature type="binding site" evidence="1">
    <location>
        <position position="155"/>
    </location>
    <ligand>
        <name>Zn(2+)</name>
        <dbReference type="ChEBI" id="CHEBI:29105"/>
        <label>2</label>
    </ligand>
</feature>
<feature type="binding site" evidence="1">
    <location>
        <position position="158"/>
    </location>
    <ligand>
        <name>Zn(2+)</name>
        <dbReference type="ChEBI" id="CHEBI:29105"/>
        <label>2</label>
    </ligand>
</feature>
<feature type="binding site" evidence="1">
    <location>
        <position position="169"/>
    </location>
    <ligand>
        <name>Zn(2+)</name>
        <dbReference type="ChEBI" id="CHEBI:29105"/>
        <label>1</label>
    </ligand>
</feature>
<feature type="binding site" evidence="1">
    <location>
        <position position="172"/>
    </location>
    <ligand>
        <name>Zn(2+)</name>
        <dbReference type="ChEBI" id="CHEBI:29105"/>
        <label>1</label>
    </ligand>
</feature>
<reference key="1">
    <citation type="journal article" date="2005" name="Arch. Microbiol.">
        <title>The genome sequence of an anaerobic aromatic-degrading denitrifying bacterium, strain EbN1.</title>
        <authorList>
            <person name="Rabus R."/>
            <person name="Kube M."/>
            <person name="Heider J."/>
            <person name="Beck A."/>
            <person name="Heitmann K."/>
            <person name="Widdel F."/>
            <person name="Reinhardt R."/>
        </authorList>
    </citation>
    <scope>NUCLEOTIDE SEQUENCE [LARGE SCALE GENOMIC DNA]</scope>
    <source>
        <strain>DSM 19018 / LMG 30748 / EbN1</strain>
    </source>
</reference>
<sequence>MSPTDPHSLLGLSPGAGEREIKHAFRRLAMRWHPDRNADPAAIEHFKRLRAAYEDLLAEYSRCPAPAAAPHDAQAADARPEPPPEAPPRGADRREDLVLTMEEAFAGGEKAFTIADEIPCGACGGSGEEVLRHTRLCATCHGSGRVRDGRSLTACADCAGRGYLSRQACGACHGSGQARAARKLHVRIPAGVLDGDELRVAGADEDCDRSGGEPGDLILRVVLAPHALYRLDGRDLILSRPVSAFRMLLGGELPIPLPDGVRHLKLESGRATTRELRVKGAGFPGRGKQRAGALIVRLVPVLPEAPDAEILALLEIAESRLQNTLSRHLPDVASWEERWLPDIPETR</sequence>
<keyword id="KW-0143">Chaperone</keyword>
<keyword id="KW-0963">Cytoplasm</keyword>
<keyword id="KW-0235">DNA replication</keyword>
<keyword id="KW-0479">Metal-binding</keyword>
<keyword id="KW-1185">Reference proteome</keyword>
<keyword id="KW-0677">Repeat</keyword>
<keyword id="KW-0346">Stress response</keyword>
<keyword id="KW-0862">Zinc</keyword>
<keyword id="KW-0863">Zinc-finger</keyword>
<organism>
    <name type="scientific">Aromatoleum aromaticum (strain DSM 19018 / LMG 30748 / EbN1)</name>
    <name type="common">Azoarcus sp. (strain EbN1)</name>
    <dbReference type="NCBI Taxonomy" id="76114"/>
    <lineage>
        <taxon>Bacteria</taxon>
        <taxon>Pseudomonadati</taxon>
        <taxon>Pseudomonadota</taxon>
        <taxon>Betaproteobacteria</taxon>
        <taxon>Rhodocyclales</taxon>
        <taxon>Rhodocyclaceae</taxon>
        <taxon>Aromatoleum</taxon>
    </lineage>
</organism>
<accession>Q5P3M1</accession>
<proteinExistence type="inferred from homology"/>
<comment type="function">
    <text evidence="1">Participates actively in the response to hyperosmotic and heat shock by preventing the aggregation of stress-denatured proteins and by disaggregating proteins, also in an autonomous, DnaK-independent fashion. Unfolded proteins bind initially to DnaJ; upon interaction with the DnaJ-bound protein, DnaK hydrolyzes its bound ATP, resulting in the formation of a stable complex. GrpE releases ADP from DnaK; ATP binding to DnaK triggers the release of the substrate protein, thus completing the reaction cycle. Several rounds of ATP-dependent interactions between DnaJ, DnaK and GrpE are required for fully efficient folding. Also involved, together with DnaK and GrpE, in the DNA replication of plasmids through activation of initiation proteins.</text>
</comment>
<comment type="cofactor">
    <cofactor evidence="1">
        <name>Zn(2+)</name>
        <dbReference type="ChEBI" id="CHEBI:29105"/>
    </cofactor>
    <text evidence="1">Binds 2 Zn(2+) ions per monomer.</text>
</comment>
<comment type="subunit">
    <text evidence="1">Homodimer.</text>
</comment>
<comment type="subcellular location">
    <subcellularLocation>
        <location evidence="1">Cytoplasm</location>
    </subcellularLocation>
</comment>
<comment type="domain">
    <text evidence="1">The J domain is necessary and sufficient to stimulate DnaK ATPase activity. Zinc center 1 plays an important role in the autonomous, DnaK-independent chaperone activity of DnaJ. Zinc center 2 is essential for interaction with DnaK and for DnaJ activity.</text>
</comment>
<comment type="similarity">
    <text evidence="1">Belongs to the DnaJ family.</text>
</comment>
<dbReference type="EMBL" id="CR555306">
    <property type="protein sequence ID" value="CAI08093.1"/>
    <property type="molecule type" value="Genomic_DNA"/>
</dbReference>
<dbReference type="RefSeq" id="WP_011237786.1">
    <property type="nucleotide sequence ID" value="NC_006513.1"/>
</dbReference>
<dbReference type="SMR" id="Q5P3M1"/>
<dbReference type="STRING" id="76114.ebA3490"/>
<dbReference type="KEGG" id="eba:ebA3490"/>
<dbReference type="eggNOG" id="COG0484">
    <property type="taxonomic scope" value="Bacteria"/>
</dbReference>
<dbReference type="HOGENOM" id="CLU_017633_0_7_4"/>
<dbReference type="OrthoDB" id="9779889at2"/>
<dbReference type="Proteomes" id="UP000006552">
    <property type="component" value="Chromosome"/>
</dbReference>
<dbReference type="GO" id="GO:0005737">
    <property type="term" value="C:cytoplasm"/>
    <property type="evidence" value="ECO:0007669"/>
    <property type="project" value="UniProtKB-SubCell"/>
</dbReference>
<dbReference type="GO" id="GO:0005524">
    <property type="term" value="F:ATP binding"/>
    <property type="evidence" value="ECO:0007669"/>
    <property type="project" value="InterPro"/>
</dbReference>
<dbReference type="GO" id="GO:0031072">
    <property type="term" value="F:heat shock protein binding"/>
    <property type="evidence" value="ECO:0007669"/>
    <property type="project" value="InterPro"/>
</dbReference>
<dbReference type="GO" id="GO:0051082">
    <property type="term" value="F:unfolded protein binding"/>
    <property type="evidence" value="ECO:0007669"/>
    <property type="project" value="UniProtKB-UniRule"/>
</dbReference>
<dbReference type="GO" id="GO:0008270">
    <property type="term" value="F:zinc ion binding"/>
    <property type="evidence" value="ECO:0007669"/>
    <property type="project" value="UniProtKB-UniRule"/>
</dbReference>
<dbReference type="GO" id="GO:0051085">
    <property type="term" value="P:chaperone cofactor-dependent protein refolding"/>
    <property type="evidence" value="ECO:0007669"/>
    <property type="project" value="TreeGrafter"/>
</dbReference>
<dbReference type="GO" id="GO:0006260">
    <property type="term" value="P:DNA replication"/>
    <property type="evidence" value="ECO:0007669"/>
    <property type="project" value="UniProtKB-KW"/>
</dbReference>
<dbReference type="GO" id="GO:0042026">
    <property type="term" value="P:protein refolding"/>
    <property type="evidence" value="ECO:0007669"/>
    <property type="project" value="TreeGrafter"/>
</dbReference>
<dbReference type="GO" id="GO:0009408">
    <property type="term" value="P:response to heat"/>
    <property type="evidence" value="ECO:0007669"/>
    <property type="project" value="InterPro"/>
</dbReference>
<dbReference type="CDD" id="cd06257">
    <property type="entry name" value="DnaJ"/>
    <property type="match status" value="1"/>
</dbReference>
<dbReference type="CDD" id="cd10747">
    <property type="entry name" value="DnaJ_C"/>
    <property type="match status" value="1"/>
</dbReference>
<dbReference type="CDD" id="cd10719">
    <property type="entry name" value="DnaJ_zf"/>
    <property type="match status" value="1"/>
</dbReference>
<dbReference type="Gene3D" id="6.20.20.10">
    <property type="match status" value="2"/>
</dbReference>
<dbReference type="Gene3D" id="1.10.287.110">
    <property type="entry name" value="DnaJ domain"/>
    <property type="match status" value="1"/>
</dbReference>
<dbReference type="Gene3D" id="2.60.260.20">
    <property type="entry name" value="Urease metallochaperone UreE, N-terminal domain"/>
    <property type="match status" value="2"/>
</dbReference>
<dbReference type="HAMAP" id="MF_01152">
    <property type="entry name" value="DnaJ"/>
    <property type="match status" value="1"/>
</dbReference>
<dbReference type="InterPro" id="IPR012724">
    <property type="entry name" value="DnaJ"/>
</dbReference>
<dbReference type="InterPro" id="IPR002939">
    <property type="entry name" value="DnaJ_C"/>
</dbReference>
<dbReference type="InterPro" id="IPR001623">
    <property type="entry name" value="DnaJ_domain"/>
</dbReference>
<dbReference type="InterPro" id="IPR008971">
    <property type="entry name" value="HSP40/DnaJ_pept-bd"/>
</dbReference>
<dbReference type="InterPro" id="IPR001305">
    <property type="entry name" value="HSP_DnaJ_Cys-rich_dom"/>
</dbReference>
<dbReference type="InterPro" id="IPR036410">
    <property type="entry name" value="HSP_DnaJ_Cys-rich_dom_sf"/>
</dbReference>
<dbReference type="InterPro" id="IPR036869">
    <property type="entry name" value="J_dom_sf"/>
</dbReference>
<dbReference type="PANTHER" id="PTHR43096">
    <property type="entry name" value="DNAJ HOMOLOG 1, MITOCHONDRIAL-RELATED"/>
    <property type="match status" value="1"/>
</dbReference>
<dbReference type="PANTHER" id="PTHR43096:SF52">
    <property type="entry name" value="DNAJ HOMOLOG 1, MITOCHONDRIAL-RELATED"/>
    <property type="match status" value="1"/>
</dbReference>
<dbReference type="Pfam" id="PF00226">
    <property type="entry name" value="DnaJ"/>
    <property type="match status" value="1"/>
</dbReference>
<dbReference type="Pfam" id="PF01556">
    <property type="entry name" value="DnaJ_C"/>
    <property type="match status" value="1"/>
</dbReference>
<dbReference type="PRINTS" id="PR00625">
    <property type="entry name" value="JDOMAIN"/>
</dbReference>
<dbReference type="SMART" id="SM00271">
    <property type="entry name" value="DnaJ"/>
    <property type="match status" value="1"/>
</dbReference>
<dbReference type="SUPFAM" id="SSF46565">
    <property type="entry name" value="Chaperone J-domain"/>
    <property type="match status" value="1"/>
</dbReference>
<dbReference type="SUPFAM" id="SSF57938">
    <property type="entry name" value="DnaJ/Hsp40 cysteine-rich domain"/>
    <property type="match status" value="1"/>
</dbReference>
<dbReference type="SUPFAM" id="SSF49493">
    <property type="entry name" value="HSP40/DnaJ peptide-binding domain"/>
    <property type="match status" value="2"/>
</dbReference>
<dbReference type="PROSITE" id="PS50076">
    <property type="entry name" value="DNAJ_2"/>
    <property type="match status" value="1"/>
</dbReference>
<dbReference type="PROSITE" id="PS51188">
    <property type="entry name" value="ZF_CR"/>
    <property type="match status" value="1"/>
</dbReference>